<keyword id="KW-0249">Electron transport</keyword>
<keyword id="KW-0472">Membrane</keyword>
<keyword id="KW-0496">Mitochondrion</keyword>
<keyword id="KW-0520">NAD</keyword>
<keyword id="KW-1185">Reference proteome</keyword>
<keyword id="KW-0679">Respiratory chain</keyword>
<keyword id="KW-0691">RNA editing</keyword>
<keyword id="KW-1278">Translocase</keyword>
<keyword id="KW-0812">Transmembrane</keyword>
<keyword id="KW-1133">Transmembrane helix</keyword>
<keyword id="KW-0813">Transport</keyword>
<keyword id="KW-0830">Ubiquinone</keyword>
<geneLocation type="mitochondrion"/>
<dbReference type="EC" id="7.1.1.2"/>
<dbReference type="EMBL" id="X14262">
    <property type="protein sequence ID" value="CAA32475.1"/>
    <property type="status" value="ALT_SEQ"/>
    <property type="molecule type" value="Genomic_DNA"/>
</dbReference>
<dbReference type="EMBL" id="X59153">
    <property type="protein sequence ID" value="CAA41864.1"/>
    <property type="status" value="ALT_SEQ"/>
    <property type="molecule type" value="Genomic_DNA"/>
</dbReference>
<dbReference type="PIR" id="JQ1374">
    <property type="entry name" value="DNWTU3"/>
</dbReference>
<dbReference type="RefSeq" id="YP_398425.1">
    <property type="nucleotide sequence ID" value="NC_007579.1"/>
</dbReference>
<dbReference type="SMR" id="P60160"/>
<dbReference type="PaxDb" id="4565-Traes_6BL_BEB17004A.1"/>
<dbReference type="Proteomes" id="UP000019116">
    <property type="component" value="Unplaced"/>
</dbReference>
<dbReference type="GO" id="GO:0031966">
    <property type="term" value="C:mitochondrial membrane"/>
    <property type="evidence" value="ECO:0007669"/>
    <property type="project" value="UniProtKB-SubCell"/>
</dbReference>
<dbReference type="GO" id="GO:0008137">
    <property type="term" value="F:NADH dehydrogenase (ubiquinone) activity"/>
    <property type="evidence" value="ECO:0007669"/>
    <property type="project" value="UniProtKB-EC"/>
</dbReference>
<dbReference type="FunFam" id="1.20.58.1610:FF:000006">
    <property type="entry name" value="NADH-ubiquinone oxidoreductase chain 3"/>
    <property type="match status" value="1"/>
</dbReference>
<dbReference type="Gene3D" id="1.20.58.1610">
    <property type="entry name" value="NADH:ubiquinone/plastoquinone oxidoreductase, chain 3"/>
    <property type="match status" value="1"/>
</dbReference>
<dbReference type="HAMAP" id="MF_01394">
    <property type="entry name" value="NDH1_NuoA"/>
    <property type="match status" value="1"/>
</dbReference>
<dbReference type="InterPro" id="IPR023043">
    <property type="entry name" value="NAD(P)H_OxRDtase_bac/plastid"/>
</dbReference>
<dbReference type="InterPro" id="IPR000440">
    <property type="entry name" value="NADH_UbQ/plastoQ_OxRdtase_su3"/>
</dbReference>
<dbReference type="InterPro" id="IPR038430">
    <property type="entry name" value="NDAH_ubi_oxred_su3_sf"/>
</dbReference>
<dbReference type="PANTHER" id="PTHR11058">
    <property type="entry name" value="NADH-UBIQUINONE OXIDOREDUCTASE CHAIN 3"/>
    <property type="match status" value="1"/>
</dbReference>
<dbReference type="PANTHER" id="PTHR11058:SF9">
    <property type="entry name" value="NADH-UBIQUINONE OXIDOREDUCTASE CHAIN 3"/>
    <property type="match status" value="1"/>
</dbReference>
<dbReference type="Pfam" id="PF00507">
    <property type="entry name" value="Oxidored_q4"/>
    <property type="match status" value="1"/>
</dbReference>
<accession>P60160</accession>
<accession>P18903</accession>
<accession>Q96032</accession>
<gene>
    <name type="primary">ND3</name>
    <name type="synonym">NAD3</name>
</gene>
<name>NU3M_WHEAT</name>
<proteinExistence type="evidence at transcript level"/>
<evidence type="ECO:0000250" key="1"/>
<evidence type="ECO:0000255" key="2"/>
<evidence type="ECO:0000269" key="3">
    <source>
    </source>
</evidence>
<evidence type="ECO:0000305" key="4"/>
<organism>
    <name type="scientific">Triticum aestivum</name>
    <name type="common">Wheat</name>
    <dbReference type="NCBI Taxonomy" id="4565"/>
    <lineage>
        <taxon>Eukaryota</taxon>
        <taxon>Viridiplantae</taxon>
        <taxon>Streptophyta</taxon>
        <taxon>Embryophyta</taxon>
        <taxon>Tracheophyta</taxon>
        <taxon>Spermatophyta</taxon>
        <taxon>Magnoliopsida</taxon>
        <taxon>Liliopsida</taxon>
        <taxon>Poales</taxon>
        <taxon>Poaceae</taxon>
        <taxon>BOP clade</taxon>
        <taxon>Pooideae</taxon>
        <taxon>Triticodae</taxon>
        <taxon>Triticeae</taxon>
        <taxon>Triticinae</taxon>
        <taxon>Triticum</taxon>
    </lineage>
</organism>
<reference key="1">
    <citation type="journal article" date="1988" name="Mol. Gen. Genet.">
        <title>The genes coding for subunit 3 of NADH dehydrogenase and for ribosomal protein S12 are present in the wheat and maize mitochondrial genomes and are co-transcribed.</title>
        <authorList>
            <person name="Gualberto J.M."/>
            <person name="Wintz H."/>
            <person name="Weil J.-H."/>
            <person name="Grienenberger J.-M."/>
        </authorList>
    </citation>
    <scope>NUCLEOTIDE SEQUENCE [GENOMIC DNA]</scope>
</reference>
<reference key="2">
    <citation type="journal article" date="1991" name="Plant Cell">
        <title>Expression of the wheat mitochondrial nad3-rps12 transcription unit: correlation between editing and mRNA maturation.</title>
        <authorList>
            <person name="Gualberto J.M."/>
            <person name="Bonnard G."/>
            <person name="Lamattina L."/>
            <person name="Grienenberger J.-M."/>
        </authorList>
    </citation>
    <scope>NUCLEOTIDE SEQUENCE [GENOMIC DNA]</scope>
    <scope>RNA EDITING</scope>
    <source>
        <strain>cv. Capitole</strain>
        <tissue>Etiolated seedling</tissue>
    </source>
</reference>
<protein>
    <recommendedName>
        <fullName>NADH-ubiquinone oxidoreductase chain 3</fullName>
        <ecNumber>7.1.1.2</ecNumber>
    </recommendedName>
    <alternativeName>
        <fullName>NADH dehydrogenase subunit 3</fullName>
    </alternativeName>
</protein>
<feature type="chain" id="PRO_0000117839" description="NADH-ubiquinone oxidoreductase chain 3">
    <location>
        <begin position="1"/>
        <end position="118"/>
    </location>
</feature>
<feature type="transmembrane region" description="Helical" evidence="2">
    <location>
        <begin position="9"/>
        <end position="29"/>
    </location>
</feature>
<feature type="transmembrane region" description="Helical" evidence="2">
    <location>
        <begin position="62"/>
        <end position="82"/>
    </location>
</feature>
<feature type="transmembrane region" description="Helical" evidence="2">
    <location>
        <begin position="87"/>
        <end position="107"/>
    </location>
</feature>
<sequence>MLEFAPICIYLVISLLVSLILLGVPFLFASNSSTYPEKLSAYECGFDPFGDARSRFDIRFYLVSILFIIFDLEVTFFFPWAVSLNKIDLFGFWSMMAFLLILTIGFLYEWKRGALDWE</sequence>
<comment type="function">
    <text evidence="1">Core subunit of the mitochondrial membrane respiratory chain NADH dehydrogenase (Complex I) that is believed to belong to the minimal assembly required for catalysis. Complex I functions in the transfer of electrons from NADH to the respiratory chain. The immediate electron acceptor for the enzyme is believed to be ubiquinone (By similarity).</text>
</comment>
<comment type="catalytic activity">
    <reaction>
        <text>a ubiquinone + NADH + 5 H(+)(in) = a ubiquinol + NAD(+) + 4 H(+)(out)</text>
        <dbReference type="Rhea" id="RHEA:29091"/>
        <dbReference type="Rhea" id="RHEA-COMP:9565"/>
        <dbReference type="Rhea" id="RHEA-COMP:9566"/>
        <dbReference type="ChEBI" id="CHEBI:15378"/>
        <dbReference type="ChEBI" id="CHEBI:16389"/>
        <dbReference type="ChEBI" id="CHEBI:17976"/>
        <dbReference type="ChEBI" id="CHEBI:57540"/>
        <dbReference type="ChEBI" id="CHEBI:57945"/>
        <dbReference type="EC" id="7.1.1.2"/>
    </reaction>
</comment>
<comment type="subcellular location">
    <subcellularLocation>
        <location evidence="1">Mitochondrion membrane</location>
        <topology evidence="1">Multi-pass membrane protein</topology>
    </subcellularLocation>
</comment>
<comment type="RNA editing">
    <location>
        <position position="2" evidence="3"/>
    </location>
    <location>
        <position position="15" evidence="3"/>
    </location>
    <location>
        <position position="21" evidence="3"/>
    </location>
    <location>
        <position position="27" evidence="3"/>
    </location>
    <location>
        <position position="46" evidence="3"/>
    </location>
    <location>
        <position position="49" evidence="3"/>
    </location>
    <location>
        <position position="64" evidence="3"/>
    </location>
    <location>
        <position position="70" evidence="3"/>
    </location>
    <location>
        <position position="72" evidence="3"/>
    </location>
    <location>
        <position position="77" evidence="3"/>
    </location>
    <location>
        <position position="83" evidence="3"/>
    </location>
    <location>
        <position position="84" evidence="3"/>
    </location>
    <location>
        <position position="92" evidence="3"/>
    </location>
    <location>
        <position position="106" evidence="3"/>
    </location>
    <location>
        <position position="115" evidence="3"/>
    </location>
    <location>
        <position position="117" evidence="3"/>
    </location>
</comment>
<comment type="similarity">
    <text evidence="4">Belongs to the complex I subunit 3 family.</text>
</comment>